<organism>
    <name type="scientific">Mycobacterium bovis (strain ATCC BAA-935 / AF2122/97)</name>
    <dbReference type="NCBI Taxonomy" id="233413"/>
    <lineage>
        <taxon>Bacteria</taxon>
        <taxon>Bacillati</taxon>
        <taxon>Actinomycetota</taxon>
        <taxon>Actinomycetes</taxon>
        <taxon>Mycobacteriales</taxon>
        <taxon>Mycobacteriaceae</taxon>
        <taxon>Mycobacterium</taxon>
        <taxon>Mycobacterium tuberculosis complex</taxon>
    </lineage>
</organism>
<accession>Q7U0P8</accession>
<accession>A0A1R3XXC4</accession>
<accession>X2BH82</accession>
<keyword id="KW-0133">Cell shape</keyword>
<keyword id="KW-0961">Cell wall biogenesis/degradation</keyword>
<keyword id="KW-0460">Magnesium</keyword>
<keyword id="KW-0479">Metal-binding</keyword>
<keyword id="KW-0573">Peptidoglycan synthesis</keyword>
<keyword id="KW-1185">Reference proteome</keyword>
<keyword id="KW-0808">Transferase</keyword>
<sequence length="262" mass="29479">MEIIPPRLKEPLYRLYELRLRQGLAASKSDLPRHIAVLCDGNRRWARSAGYDDVSYGYRMGAAKIAEMLRWCHEAGIELATVYLLSTENLQRDPDELAALIEIITDVVEEICAPANHWSVRTVGDLGLIGEEPARRLRGAVESTPEVASFHVNVAVGYGGRREIVDAVRALLSKELANGATAEELVDAVTVEGISENLYTSGQPDPDLVIRTSGEQRLSGFLLWQSAYSEMWFTEAHWPAFRHVDFLRALRDYSARHRRYGR</sequence>
<dbReference type="EC" id="2.5.1.68"/>
<dbReference type="EMBL" id="LT708304">
    <property type="protein sequence ID" value="SIT99714.1"/>
    <property type="molecule type" value="Genomic_DNA"/>
</dbReference>
<dbReference type="RefSeq" id="NP_854770.1">
    <property type="nucleotide sequence ID" value="NC_002945.3"/>
</dbReference>
<dbReference type="RefSeq" id="WP_003903314.1">
    <property type="nucleotide sequence ID" value="NC_002945.4"/>
</dbReference>
<dbReference type="SMR" id="Q7U0P8"/>
<dbReference type="BindingDB" id="Q7U0P8"/>
<dbReference type="KEGG" id="mbo:BQ2027_MB1115"/>
<dbReference type="PATRIC" id="fig|233413.5.peg.1217"/>
<dbReference type="UniPathway" id="UPA00772"/>
<dbReference type="Proteomes" id="UP000001419">
    <property type="component" value="Chromosome"/>
</dbReference>
<dbReference type="GO" id="GO:0005886">
    <property type="term" value="C:plasma membrane"/>
    <property type="evidence" value="ECO:0007669"/>
    <property type="project" value="TreeGrafter"/>
</dbReference>
<dbReference type="GO" id="GO:0045547">
    <property type="term" value="F:ditrans,polycis-polyprenyl diphosphate synthase [(2E,6E)-farnesyl diphosphate specific] activity"/>
    <property type="evidence" value="ECO:0007669"/>
    <property type="project" value="TreeGrafter"/>
</dbReference>
<dbReference type="GO" id="GO:0000287">
    <property type="term" value="F:magnesium ion binding"/>
    <property type="evidence" value="ECO:0007669"/>
    <property type="project" value="UniProtKB-UniRule"/>
</dbReference>
<dbReference type="GO" id="GO:0033850">
    <property type="term" value="F:Z-farnesyl diphosphate synthase activity"/>
    <property type="evidence" value="ECO:0007669"/>
    <property type="project" value="UniProtKB-EC"/>
</dbReference>
<dbReference type="GO" id="GO:0071555">
    <property type="term" value="P:cell wall organization"/>
    <property type="evidence" value="ECO:0007669"/>
    <property type="project" value="UniProtKB-KW"/>
</dbReference>
<dbReference type="GO" id="GO:0009252">
    <property type="term" value="P:peptidoglycan biosynthetic process"/>
    <property type="evidence" value="ECO:0007669"/>
    <property type="project" value="UniProtKB-KW"/>
</dbReference>
<dbReference type="GO" id="GO:0016094">
    <property type="term" value="P:polyprenol biosynthetic process"/>
    <property type="evidence" value="ECO:0007669"/>
    <property type="project" value="TreeGrafter"/>
</dbReference>
<dbReference type="GO" id="GO:0008360">
    <property type="term" value="P:regulation of cell shape"/>
    <property type="evidence" value="ECO:0007669"/>
    <property type="project" value="UniProtKB-KW"/>
</dbReference>
<dbReference type="CDD" id="cd00475">
    <property type="entry name" value="Cis_IPPS"/>
    <property type="match status" value="1"/>
</dbReference>
<dbReference type="FunFam" id="3.40.1180.10:FF:000003">
    <property type="entry name" value="Isoprenyl transferase 2"/>
    <property type="match status" value="1"/>
</dbReference>
<dbReference type="Gene3D" id="3.40.1180.10">
    <property type="entry name" value="Decaprenyl diphosphate synthase-like"/>
    <property type="match status" value="1"/>
</dbReference>
<dbReference type="HAMAP" id="MF_01139">
    <property type="entry name" value="ISPT"/>
    <property type="match status" value="1"/>
</dbReference>
<dbReference type="InterPro" id="IPR001441">
    <property type="entry name" value="UPP_synth-like"/>
</dbReference>
<dbReference type="InterPro" id="IPR018520">
    <property type="entry name" value="UPP_synth-like_CS"/>
</dbReference>
<dbReference type="InterPro" id="IPR036424">
    <property type="entry name" value="UPP_synth-like_sf"/>
</dbReference>
<dbReference type="NCBIfam" id="NF011403">
    <property type="entry name" value="PRK14828.1"/>
    <property type="match status" value="1"/>
</dbReference>
<dbReference type="NCBIfam" id="TIGR00055">
    <property type="entry name" value="uppS"/>
    <property type="match status" value="1"/>
</dbReference>
<dbReference type="PANTHER" id="PTHR10291:SF43">
    <property type="entry name" value="DEHYDRODOLICHYL DIPHOSPHATE SYNTHASE COMPLEX SUBUNIT DHDDS"/>
    <property type="match status" value="1"/>
</dbReference>
<dbReference type="PANTHER" id="PTHR10291">
    <property type="entry name" value="DEHYDRODOLICHYL DIPHOSPHATE SYNTHASE FAMILY MEMBER"/>
    <property type="match status" value="1"/>
</dbReference>
<dbReference type="Pfam" id="PF01255">
    <property type="entry name" value="Prenyltransf"/>
    <property type="match status" value="1"/>
</dbReference>
<dbReference type="SUPFAM" id="SSF64005">
    <property type="entry name" value="Undecaprenyl diphosphate synthase"/>
    <property type="match status" value="1"/>
</dbReference>
<dbReference type="PROSITE" id="PS01066">
    <property type="entry name" value="UPP_SYNTHASE"/>
    <property type="match status" value="1"/>
</dbReference>
<name>ZFPP_MYCBO</name>
<reference key="1">
    <citation type="journal article" date="2003" name="Proc. Natl. Acad. Sci. U.S.A.">
        <title>The complete genome sequence of Mycobacterium bovis.</title>
        <authorList>
            <person name="Garnier T."/>
            <person name="Eiglmeier K."/>
            <person name="Camus J.-C."/>
            <person name="Medina N."/>
            <person name="Mansoor H."/>
            <person name="Pryor M."/>
            <person name="Duthoy S."/>
            <person name="Grondin S."/>
            <person name="Lacroix C."/>
            <person name="Monsempe C."/>
            <person name="Simon S."/>
            <person name="Harris B."/>
            <person name="Atkin R."/>
            <person name="Doggett J."/>
            <person name="Mayes R."/>
            <person name="Keating L."/>
            <person name="Wheeler P.R."/>
            <person name="Parkhill J."/>
            <person name="Barrell B.G."/>
            <person name="Cole S.T."/>
            <person name="Gordon S.V."/>
            <person name="Hewinson R.G."/>
        </authorList>
    </citation>
    <scope>NUCLEOTIDE SEQUENCE [LARGE SCALE GENOMIC DNA]</scope>
    <source>
        <strain>ATCC BAA-935 / AF2122/97</strain>
    </source>
</reference>
<reference key="2">
    <citation type="journal article" date="2017" name="Genome Announc.">
        <title>Updated reference genome sequence and annotation of Mycobacterium bovis AF2122/97.</title>
        <authorList>
            <person name="Malone K.M."/>
            <person name="Farrell D."/>
            <person name="Stuber T.P."/>
            <person name="Schubert O.T."/>
            <person name="Aebersold R."/>
            <person name="Robbe-Austerman S."/>
            <person name="Gordon S.V."/>
        </authorList>
    </citation>
    <scope>NUCLEOTIDE SEQUENCE [LARGE SCALE GENOMIC DNA]</scope>
    <scope>GENOME REANNOTATION</scope>
    <source>
        <strain>ATCC BAA-935 / AF2122/97</strain>
    </source>
</reference>
<proteinExistence type="inferred from homology"/>
<comment type="function">
    <text evidence="1">Generates Z-farnesyl diphosphate (Z-FPP) from isopentenyl pyrophosphate (IPP). Z-FPP is the precursor of decaprenyl diphosphate, which has a central role in the biosynthesis of the mycobacterial cell wall (By similarity).</text>
</comment>
<comment type="catalytic activity">
    <reaction>
        <text>isopentenyl diphosphate + (2E)-geranyl diphosphate = (2Z,6E)-farnesyl diphosphate + diphosphate</text>
        <dbReference type="Rhea" id="RHEA:23300"/>
        <dbReference type="ChEBI" id="CHEBI:33019"/>
        <dbReference type="ChEBI" id="CHEBI:58057"/>
        <dbReference type="ChEBI" id="CHEBI:128769"/>
        <dbReference type="ChEBI" id="CHEBI:162247"/>
        <dbReference type="EC" id="2.5.1.68"/>
    </reaction>
</comment>
<comment type="cofactor">
    <cofactor evidence="1">
        <name>Mg(2+)</name>
        <dbReference type="ChEBI" id="CHEBI:18420"/>
    </cofactor>
    <text evidence="1">Binds 2 magnesium ions per subunit.</text>
</comment>
<comment type="pathway">
    <text>Phospholipid metabolism; decaprenyl phosphate biosynthesis.</text>
</comment>
<comment type="similarity">
    <text evidence="2">Belongs to the UPP synthase family. Z-FPP synthase subfamily.</text>
</comment>
<evidence type="ECO:0000250" key="1"/>
<evidence type="ECO:0000305" key="2"/>
<feature type="chain" id="PRO_0000123746" description="Short-chain Z-isoprenyl diphosphate synthase">
    <location>
        <begin position="1"/>
        <end position="262"/>
    </location>
</feature>
<feature type="active site" evidence="1">
    <location>
        <position position="40"/>
    </location>
</feature>
<feature type="active site" description="Proton acceptor" evidence="1">
    <location>
        <position position="89"/>
    </location>
</feature>
<feature type="binding site" evidence="1">
    <location>
        <position position="40"/>
    </location>
    <ligand>
        <name>Mg(2+)</name>
        <dbReference type="ChEBI" id="CHEBI:18420"/>
    </ligand>
</feature>
<feature type="binding site" evidence="1">
    <location>
        <begin position="41"/>
        <end position="44"/>
    </location>
    <ligand>
        <name>substrate</name>
    </ligand>
</feature>
<feature type="binding site" evidence="1">
    <location>
        <position position="45"/>
    </location>
    <ligand>
        <name>substrate</name>
    </ligand>
</feature>
<feature type="binding site" evidence="1">
    <location>
        <begin position="86"/>
        <end position="88"/>
    </location>
    <ligand>
        <name>substrate</name>
    </ligand>
</feature>
<feature type="binding site" evidence="1">
    <location>
        <position position="92"/>
    </location>
    <ligand>
        <name>substrate</name>
    </ligand>
</feature>
<feature type="binding site" evidence="1">
    <location>
        <position position="211"/>
    </location>
    <ligand>
        <name>substrate</name>
    </ligand>
</feature>
<feature type="binding site" evidence="1">
    <location>
        <begin position="217"/>
        <end position="219"/>
    </location>
    <ligand>
        <name>substrate</name>
    </ligand>
</feature>
<feature type="binding site" evidence="1">
    <location>
        <position position="230"/>
    </location>
    <ligand>
        <name>Mg(2+)</name>
        <dbReference type="ChEBI" id="CHEBI:18420"/>
    </ligand>
</feature>
<protein>
    <recommendedName>
        <fullName>Short-chain Z-isoprenyl diphosphate synthase</fullName>
        <ecNumber>2.5.1.68</ecNumber>
    </recommendedName>
    <alternativeName>
        <fullName>(2Z,6E)-farnesyl diphosphate synthase</fullName>
    </alternativeName>
    <alternativeName>
        <fullName>Z-FPP synthase</fullName>
    </alternativeName>
    <alternativeName>
        <fullName>Z-isoprenyl diphosphate synthase</fullName>
    </alternativeName>
</protein>
<gene>
    <name type="ordered locus">BQ2027_MB1115</name>
</gene>